<sequence>MAAETKVQVSDPEAEFLNSKQETGYEWELFKENVRPLKRGRNVGILNHALKSHSDHQLRKNLIEKRRNLIEAIDEYEGDDPLSPWIECIKWVQEAFPPGGECSGLLVIYEQCVRKFWHSERYKDDLRYLKVWLEYAEHCADAEVIYKFLEVNEIGKTHAVYYIAYALHIEFKNKVKTANEIFNLGISRDAKPVEKLNDAYKKFMVRTMRRSNTADEEPKENNDLPSRSFGTLLSRGDNNARRQALGSSNPQAKKLKPNQSSKTPFAIYADAVSDTTSGNQPESDKSRPEFGSWLMLGGRAERNKENNSLPRKWASFKVPQKPIVRTVAAASASTFEVFVDEEECTEEEEEKKKNDETISSSSNVLPLNGGREIKKETELLRQNPLRHFPPNSFLR</sequence>
<comment type="function">
    <text evidence="1 5">Essential component of the mitotic checkpoint. Required for normal mitosis progression. The mitotic checkpoint delays anaphase until all chromosomes are properly attached to the mitotic spindle. One of its checkpoint functions may be to inhibit the activity of the anaphase-promoting complex/cyclosome (APC/C) by blocking the binding of CDC20 to APC/C (By similarity).</text>
</comment>
<comment type="subunit">
    <text evidence="1 5 6">Interacts with anaphase-promoting complex/cyclosome (APC/C) (By similarity). Part of the mitotic checkpoint complex (MCC); interacts with CDC20-1 and CDC20-2. Interacts with MAD2 at chromocenters and with BUB3.1.</text>
</comment>
<comment type="subcellular location">
    <subcellularLocation>
        <location evidence="5">Chromosome</location>
    </subcellularLocation>
    <subcellularLocation>
        <location evidence="5">Cytoplasm</location>
    </subcellularLocation>
    <subcellularLocation>
        <location evidence="5">Nucleus</location>
    </subcellularLocation>
    <subcellularLocation>
        <location evidence="5">Chromosome</location>
        <location evidence="5">Centromere</location>
        <location evidence="5">Kinetochore</location>
    </subcellularLocation>
    <subcellularLocation>
        <location evidence="5">Cytoplasm</location>
        <location evidence="5">Cytoskeleton</location>
        <location evidence="5">Spindle</location>
    </subcellularLocation>
    <subcellularLocation>
        <location evidence="2">Cytoplasm</location>
        <location evidence="2">Cytoskeleton</location>
        <location evidence="2">Microtubule organizing center</location>
    </subcellularLocation>
    <text>Cytoplasmic in interphase cells. Accumulates onto both kinetochores and the spindle microtubules in cell arrested in metaphase. Associates with unattached kinetochores in early prophase upon spindle assembly checkpoint (SAC) activation. Present in chromocenters.</text>
</comment>
<comment type="alternative products">
    <event type="alternative splicing"/>
    <isoform>
        <id>O22806-1</id>
        <name>1</name>
        <sequence type="displayed"/>
    </isoform>
    <isoform>
        <id>O22806-2</id>
        <name>2</name>
        <sequence type="described" ref="VSP_047765"/>
    </isoform>
</comment>
<comment type="tissue specificity">
    <text evidence="5">Expressed in actively dividing tissues, early in organ development, in young leaves, lateral root primordia and root meristems.</text>
</comment>
<comment type="induction">
    <text evidence="5">Cell cycle regulated expression with a distinct expression peak at the G2/M boundary.</text>
</comment>
<comment type="domain">
    <text evidence="1">The KEN box is required for its ubiquitination and degradation.</text>
</comment>
<comment type="domain">
    <text>BUB1 N-terminal domain directs kinetochore localization and binding to BUB3.</text>
</comment>
<proteinExistence type="evidence at protein level"/>
<dbReference type="EMBL" id="AC002332">
    <property type="protein sequence ID" value="AAB80673.2"/>
    <property type="molecule type" value="Genomic_DNA"/>
</dbReference>
<dbReference type="EMBL" id="CP002685">
    <property type="protein sequence ID" value="AEC08852.1"/>
    <property type="molecule type" value="Genomic_DNA"/>
</dbReference>
<dbReference type="EMBL" id="CP002685">
    <property type="protein sequence ID" value="AEC08853.1"/>
    <property type="molecule type" value="Genomic_DNA"/>
</dbReference>
<dbReference type="EMBL" id="AY088206">
    <property type="protein sequence ID" value="AAM65748.1"/>
    <property type="molecule type" value="mRNA"/>
</dbReference>
<dbReference type="EMBL" id="CK118048">
    <property type="status" value="NOT_ANNOTATED_CDS"/>
    <property type="molecule type" value="mRNA"/>
</dbReference>
<dbReference type="PIR" id="A84747">
    <property type="entry name" value="A84747"/>
</dbReference>
<dbReference type="RefSeq" id="NP_001189668.1">
    <molecule id="O22806-2"/>
    <property type="nucleotide sequence ID" value="NM_001202739.2"/>
</dbReference>
<dbReference type="RefSeq" id="NP_565767.1">
    <molecule id="O22806-1"/>
    <property type="nucleotide sequence ID" value="NM_128916.3"/>
</dbReference>
<dbReference type="SMR" id="O22806"/>
<dbReference type="BioGRID" id="3268">
    <property type="interactions" value="6"/>
</dbReference>
<dbReference type="FunCoup" id="O22806">
    <property type="interactions" value="475"/>
</dbReference>
<dbReference type="IntAct" id="O22806">
    <property type="interactions" value="2"/>
</dbReference>
<dbReference type="STRING" id="3702.O22806"/>
<dbReference type="PaxDb" id="3702-AT2G33560.2"/>
<dbReference type="ProteomicsDB" id="239103">
    <molecule id="O22806-1"/>
</dbReference>
<dbReference type="EnsemblPlants" id="AT2G33560.1">
    <molecule id="O22806-1"/>
    <property type="protein sequence ID" value="AT2G33560.1"/>
    <property type="gene ID" value="AT2G33560"/>
</dbReference>
<dbReference type="EnsemblPlants" id="AT2G33560.2">
    <molecule id="O22806-2"/>
    <property type="protein sequence ID" value="AT2G33560.2"/>
    <property type="gene ID" value="AT2G33560"/>
</dbReference>
<dbReference type="GeneID" id="817921"/>
<dbReference type="Gramene" id="AT2G33560.1">
    <molecule id="O22806-1"/>
    <property type="protein sequence ID" value="AT2G33560.1"/>
    <property type="gene ID" value="AT2G33560"/>
</dbReference>
<dbReference type="Gramene" id="AT2G33560.2">
    <molecule id="O22806-2"/>
    <property type="protein sequence ID" value="AT2G33560.2"/>
    <property type="gene ID" value="AT2G33560"/>
</dbReference>
<dbReference type="KEGG" id="ath:AT2G33560"/>
<dbReference type="Araport" id="AT2G33560"/>
<dbReference type="TAIR" id="AT2G33560">
    <property type="gene designation" value="BUBR1"/>
</dbReference>
<dbReference type="eggNOG" id="KOG1166">
    <property type="taxonomic scope" value="Eukaryota"/>
</dbReference>
<dbReference type="InParanoid" id="O22806"/>
<dbReference type="OMA" id="LIVIYEQ"/>
<dbReference type="OrthoDB" id="248495at2759"/>
<dbReference type="PhylomeDB" id="O22806"/>
<dbReference type="PRO" id="PR:O22806"/>
<dbReference type="Proteomes" id="UP000006548">
    <property type="component" value="Chromosome 2"/>
</dbReference>
<dbReference type="ExpressionAtlas" id="O22806">
    <property type="expression patterns" value="baseline and differential"/>
</dbReference>
<dbReference type="GO" id="GO:0010369">
    <property type="term" value="C:chromocenter"/>
    <property type="evidence" value="ECO:0000314"/>
    <property type="project" value="TAIR"/>
</dbReference>
<dbReference type="GO" id="GO:0005737">
    <property type="term" value="C:cytoplasm"/>
    <property type="evidence" value="ECO:0000314"/>
    <property type="project" value="UniProtKB"/>
</dbReference>
<dbReference type="GO" id="GO:0000776">
    <property type="term" value="C:kinetochore"/>
    <property type="evidence" value="ECO:0000314"/>
    <property type="project" value="TAIR"/>
</dbReference>
<dbReference type="GO" id="GO:0005828">
    <property type="term" value="C:kinetochore microtubule"/>
    <property type="evidence" value="ECO:0000314"/>
    <property type="project" value="UniProtKB"/>
</dbReference>
<dbReference type="GO" id="GO:0005815">
    <property type="term" value="C:microtubule organizing center"/>
    <property type="evidence" value="ECO:0007669"/>
    <property type="project" value="UniProtKB-SubCell"/>
</dbReference>
<dbReference type="GO" id="GO:0005634">
    <property type="term" value="C:nucleus"/>
    <property type="evidence" value="ECO:0007669"/>
    <property type="project" value="UniProtKB-SubCell"/>
</dbReference>
<dbReference type="GO" id="GO:0005876">
    <property type="term" value="C:spindle microtubule"/>
    <property type="evidence" value="ECO:0000314"/>
    <property type="project" value="UniProtKB"/>
</dbReference>
<dbReference type="GO" id="GO:0007094">
    <property type="term" value="P:mitotic spindle assembly checkpoint signaling"/>
    <property type="evidence" value="ECO:0000314"/>
    <property type="project" value="TAIR"/>
</dbReference>
<dbReference type="FunFam" id="1.25.40.430:FF:000004">
    <property type="entry name" value="Mitotic spindle checkpoint protein BUBR1"/>
    <property type="match status" value="1"/>
</dbReference>
<dbReference type="Gene3D" id="1.25.40.430">
    <property type="match status" value="1"/>
</dbReference>
<dbReference type="InterPro" id="IPR015661">
    <property type="entry name" value="Bub1/Mad3"/>
</dbReference>
<dbReference type="InterPro" id="IPR013212">
    <property type="entry name" value="Mad3/Bub1_I"/>
</dbReference>
<dbReference type="PANTHER" id="PTHR14030">
    <property type="entry name" value="MITOTIC CHECKPOINT SERINE/THREONINE-PROTEIN KINASE BUB1"/>
    <property type="match status" value="1"/>
</dbReference>
<dbReference type="PANTHER" id="PTHR14030:SF19">
    <property type="entry name" value="MITOTIC SPINDLE CHECKPOINT PROTEIN BUBR1"/>
    <property type="match status" value="1"/>
</dbReference>
<dbReference type="Pfam" id="PF08311">
    <property type="entry name" value="Mad3_BUB1_I"/>
    <property type="match status" value="1"/>
</dbReference>
<dbReference type="SMART" id="SM00777">
    <property type="entry name" value="Mad3_BUB1_I"/>
    <property type="match status" value="1"/>
</dbReference>
<dbReference type="PROSITE" id="PS51489">
    <property type="entry name" value="BUB1_N"/>
    <property type="match status" value="1"/>
</dbReference>
<keyword id="KW-0025">Alternative splicing</keyword>
<keyword id="KW-0131">Cell cycle</keyword>
<keyword id="KW-0137">Centromere</keyword>
<keyword id="KW-0158">Chromosome</keyword>
<keyword id="KW-0963">Cytoplasm</keyword>
<keyword id="KW-0206">Cytoskeleton</keyword>
<keyword id="KW-0995">Kinetochore</keyword>
<keyword id="KW-0539">Nucleus</keyword>
<keyword id="KW-1185">Reference proteome</keyword>
<reference key="1">
    <citation type="journal article" date="1999" name="Nature">
        <title>Sequence and analysis of chromosome 2 of the plant Arabidopsis thaliana.</title>
        <authorList>
            <person name="Lin X."/>
            <person name="Kaul S."/>
            <person name="Rounsley S.D."/>
            <person name="Shea T.P."/>
            <person name="Benito M.-I."/>
            <person name="Town C.D."/>
            <person name="Fujii C.Y."/>
            <person name="Mason T.M."/>
            <person name="Bowman C.L."/>
            <person name="Barnstead M.E."/>
            <person name="Feldblyum T.V."/>
            <person name="Buell C.R."/>
            <person name="Ketchum K.A."/>
            <person name="Lee J.J."/>
            <person name="Ronning C.M."/>
            <person name="Koo H.L."/>
            <person name="Moffat K.S."/>
            <person name="Cronin L.A."/>
            <person name="Shen M."/>
            <person name="Pai G."/>
            <person name="Van Aken S."/>
            <person name="Umayam L."/>
            <person name="Tallon L.J."/>
            <person name="Gill J.E."/>
            <person name="Adams M.D."/>
            <person name="Carrera A.J."/>
            <person name="Creasy T.H."/>
            <person name="Goodman H.M."/>
            <person name="Somerville C.R."/>
            <person name="Copenhaver G.P."/>
            <person name="Preuss D."/>
            <person name="Nierman W.C."/>
            <person name="White O."/>
            <person name="Eisen J.A."/>
            <person name="Salzberg S.L."/>
            <person name="Fraser C.M."/>
            <person name="Venter J.C."/>
        </authorList>
    </citation>
    <scope>NUCLEOTIDE SEQUENCE [LARGE SCALE GENOMIC DNA]</scope>
    <source>
        <strain>cv. Columbia</strain>
    </source>
</reference>
<reference key="2">
    <citation type="journal article" date="2017" name="Plant J.">
        <title>Araport11: a complete reannotation of the Arabidopsis thaliana reference genome.</title>
        <authorList>
            <person name="Cheng C.Y."/>
            <person name="Krishnakumar V."/>
            <person name="Chan A.P."/>
            <person name="Thibaud-Nissen F."/>
            <person name="Schobel S."/>
            <person name="Town C.D."/>
        </authorList>
    </citation>
    <scope>GENOME REANNOTATION</scope>
    <source>
        <strain>cv. Columbia</strain>
    </source>
</reference>
<reference key="3">
    <citation type="submission" date="2002-03" db="EMBL/GenBank/DDBJ databases">
        <title>Full-length cDNA from Arabidopsis thaliana.</title>
        <authorList>
            <person name="Brover V.V."/>
            <person name="Troukhan M.E."/>
            <person name="Alexandrov N.A."/>
            <person name="Lu Y.-P."/>
            <person name="Flavell R.B."/>
            <person name="Feldmann K.A."/>
        </authorList>
    </citation>
    <scope>NUCLEOTIDE SEQUENCE [LARGE SCALE MRNA] (ISOFORM 1)</scope>
</reference>
<reference key="4">
    <citation type="journal article" date="2005" name="Mol. Cell. Proteomics">
        <title>High throughput identification of potential Arabidopsis mitogen-activated protein kinases substrates.</title>
        <authorList>
            <person name="Feilner T."/>
            <person name="Hultschig C."/>
            <person name="Lee J."/>
            <person name="Meyer S."/>
            <person name="Immink R.G.H."/>
            <person name="Koenig A."/>
            <person name="Possling A."/>
            <person name="Seitz H."/>
            <person name="Beveridge A."/>
            <person name="Scheel D."/>
            <person name="Cahill D.J."/>
            <person name="Lehrach H."/>
            <person name="Kreutzberger J."/>
            <person name="Kersten B."/>
        </authorList>
    </citation>
    <scope>NUCLEOTIDE SEQUENCE [MRNA] OF 1-233 (ISOFORM 1)</scope>
    <source>
        <strain>cv. Columbia</strain>
    </source>
</reference>
<reference key="5">
    <citation type="journal article" date="2009" name="PLoS ONE">
        <title>Spindle assembly checkpoint protein dynamics reveal conserved and unsuspected roles in plant cell division.</title>
        <authorList>
            <person name="Caillaud M.-C."/>
            <person name="Paganelli L."/>
            <person name="Lecomte P."/>
            <person name="Deslandes L."/>
            <person name="Quentin M."/>
            <person name="Pecrix Y."/>
            <person name="Le Bris M."/>
            <person name="Marfaing N."/>
            <person name="Abad P."/>
            <person name="Favery B."/>
        </authorList>
    </citation>
    <scope>FUNCTION</scope>
    <scope>INTERACTION WITH MAD2 AND BUB3.1</scope>
    <scope>SUBCELLULAR LOCATION</scope>
    <scope>TISSUE SPECIFICITY</scope>
    <scope>INDUCTION</scope>
</reference>
<reference key="6">
    <citation type="journal article" date="2011" name="PLoS ONE">
        <title>Conserved CDC20 cell cycle functions are carried out by two of the five isoforms in Arabidopsis thaliana.</title>
        <authorList>
            <person name="Kevei Z."/>
            <person name="Baloban M."/>
            <person name="Da Ines O."/>
            <person name="Tiricz H."/>
            <person name="Kroll A."/>
            <person name="Regulski K."/>
            <person name="Mergaert P."/>
            <person name="Kondorosi E."/>
        </authorList>
    </citation>
    <scope>INTERACTION WITH CDC20-1 AND CDC20-2</scope>
</reference>
<organism>
    <name type="scientific">Arabidopsis thaliana</name>
    <name type="common">Mouse-ear cress</name>
    <dbReference type="NCBI Taxonomy" id="3702"/>
    <lineage>
        <taxon>Eukaryota</taxon>
        <taxon>Viridiplantae</taxon>
        <taxon>Streptophyta</taxon>
        <taxon>Embryophyta</taxon>
        <taxon>Tracheophyta</taxon>
        <taxon>Spermatophyta</taxon>
        <taxon>Magnoliopsida</taxon>
        <taxon>eudicotyledons</taxon>
        <taxon>Gunneridae</taxon>
        <taxon>Pentapetalae</taxon>
        <taxon>rosids</taxon>
        <taxon>malvids</taxon>
        <taxon>Brassicales</taxon>
        <taxon>Brassicaceae</taxon>
        <taxon>Camelineae</taxon>
        <taxon>Arabidopsis</taxon>
    </lineage>
</organism>
<accession>O22806</accession>
<accession>F4IFV2</accession>
<accession>Q8L9V1</accession>
<gene>
    <name type="primary">BUBR1</name>
    <name type="synonym">MAD3</name>
    <name type="ordered locus">At2g33560</name>
    <name type="ORF">F4P9.33</name>
</gene>
<name>BUBR1_ARATH</name>
<feature type="chain" id="PRO_0000423379" description="Mitotic spindle checkpoint protein BUBR1">
    <location>
        <begin position="1"/>
        <end position="395"/>
    </location>
</feature>
<feature type="domain" description="BUB1 N-terminal" evidence="3">
    <location>
        <begin position="69"/>
        <end position="224"/>
    </location>
</feature>
<feature type="region of interest" description="Necessary for kinetochore localization" evidence="1">
    <location>
        <begin position="59"/>
        <end position="206"/>
    </location>
</feature>
<feature type="region of interest" description="Disordered" evidence="4">
    <location>
        <begin position="210"/>
        <end position="263"/>
    </location>
</feature>
<feature type="region of interest" description="Disordered" evidence="4">
    <location>
        <begin position="342"/>
        <end position="395"/>
    </location>
</feature>
<feature type="short sequence motif" description="Nuclear localization signal" evidence="1">
    <location>
        <begin position="118"/>
        <end position="125"/>
    </location>
</feature>
<feature type="short sequence motif" description="KEN box 1" evidence="1">
    <location>
        <begin position="219"/>
        <end position="221"/>
    </location>
</feature>
<feature type="short sequence motif" description="KEN box 2" evidence="1">
    <location>
        <begin position="304"/>
        <end position="306"/>
    </location>
</feature>
<feature type="compositionally biased region" description="Polar residues" evidence="4">
    <location>
        <begin position="245"/>
        <end position="263"/>
    </location>
</feature>
<feature type="splice variant" id="VSP_047765" description="In isoform 2." evidence="7">
    <original>E</original>
    <variation>EQ</variation>
    <location>
        <position position="216"/>
    </location>
</feature>
<feature type="sequence conflict" description="In Ref. 3; AAM65748." evidence="7" ref="3">
    <original>S</original>
    <variation>F</variation>
    <location>
        <position position="333"/>
    </location>
</feature>
<evidence type="ECO:0000250" key="1"/>
<evidence type="ECO:0000250" key="2">
    <source>
        <dbReference type="UniProtKB" id="O60566"/>
    </source>
</evidence>
<evidence type="ECO:0000255" key="3">
    <source>
        <dbReference type="PROSITE-ProRule" id="PRU00822"/>
    </source>
</evidence>
<evidence type="ECO:0000256" key="4">
    <source>
        <dbReference type="SAM" id="MobiDB-lite"/>
    </source>
</evidence>
<evidence type="ECO:0000269" key="5">
    <source>
    </source>
</evidence>
<evidence type="ECO:0000269" key="6">
    <source>
    </source>
</evidence>
<evidence type="ECO:0000305" key="7"/>
<protein>
    <recommendedName>
        <fullName>Mitotic spindle checkpoint protein BUBR1</fullName>
    </recommendedName>
    <alternativeName>
        <fullName>BUB1-related protein 1</fullName>
    </alternativeName>
</protein>